<geneLocation type="plasmid">
    <name>sym pNGR234a</name>
</geneLocation>
<organism>
    <name type="scientific">Sinorhizobium fredii (strain NBRC 101917 / NGR234)</name>
    <dbReference type="NCBI Taxonomy" id="394"/>
    <lineage>
        <taxon>Bacteria</taxon>
        <taxon>Pseudomonadati</taxon>
        <taxon>Pseudomonadota</taxon>
        <taxon>Alphaproteobacteria</taxon>
        <taxon>Hyphomicrobiales</taxon>
        <taxon>Rhizobiaceae</taxon>
        <taxon>Sinorhizobium/Ensifer group</taxon>
        <taxon>Sinorhizobium</taxon>
    </lineage>
</organism>
<reference key="1">
    <citation type="journal article" date="1996" name="Genome Res.">
        <title>Sequencing the 500-kb GC-rich symbiotic replicon of Rhizobium sp. NGR234 using dye terminators and a thermostable 'sequenase': a beginning.</title>
        <authorList>
            <person name="Freiberg C."/>
            <person name="Perret X."/>
            <person name="Broughton W.J."/>
            <person name="Rosenthal A."/>
        </authorList>
    </citation>
    <scope>NUCLEOTIDE SEQUENCE [GENOMIC DNA]</scope>
</reference>
<reference key="2">
    <citation type="journal article" date="1997" name="Nature">
        <title>Molecular basis of symbiosis between Rhizobium and legumes.</title>
        <authorList>
            <person name="Freiberg C.A."/>
            <person name="Fellay R."/>
            <person name="Bairoch A."/>
            <person name="Broughton W.J."/>
            <person name="Rosenthal A."/>
            <person name="Perret X."/>
        </authorList>
    </citation>
    <scope>NUCLEOTIDE SEQUENCE [LARGE SCALE GENOMIC DNA]</scope>
    <source>
        <strain>NBRC 101917 / NGR234</strain>
    </source>
</reference>
<reference key="3">
    <citation type="journal article" date="2009" name="Appl. Environ. Microbiol.">
        <title>Rhizobium sp. strain NGR234 possesses a remarkable number of secretion systems.</title>
        <authorList>
            <person name="Schmeisser C."/>
            <person name="Liesegang H."/>
            <person name="Krysciak D."/>
            <person name="Bakkou N."/>
            <person name="Le Quere A."/>
            <person name="Wollherr A."/>
            <person name="Heinemeyer I."/>
            <person name="Morgenstern B."/>
            <person name="Pommerening-Roeser A."/>
            <person name="Flores M."/>
            <person name="Palacios R."/>
            <person name="Brenner S."/>
            <person name="Gottschalk G."/>
            <person name="Schmitz R.A."/>
            <person name="Broughton W.J."/>
            <person name="Perret X."/>
            <person name="Strittmatter A.W."/>
            <person name="Streit W.R."/>
        </authorList>
    </citation>
    <scope>NUCLEOTIDE SEQUENCE [LARGE SCALE GENOMIC DNA]</scope>
    <source>
        <strain>NBRC 101917 / NGR234</strain>
    </source>
</reference>
<name>NIFB_SINFN</name>
<evidence type="ECO:0000250" key="1">
    <source>
        <dbReference type="UniProtKB" id="D5VRM1"/>
    </source>
</evidence>
<evidence type="ECO:0000250" key="2">
    <source>
        <dbReference type="UniProtKB" id="P69848"/>
    </source>
</evidence>
<evidence type="ECO:0000255" key="3">
    <source>
        <dbReference type="PROSITE-ProRule" id="PRU01266"/>
    </source>
</evidence>
<evidence type="ECO:0000305" key="4"/>
<feature type="chain" id="PRO_0000153046" description="FeMo cofactor biosynthesis protein NifB">
    <location>
        <begin position="1"/>
        <end position="493"/>
    </location>
</feature>
<feature type="domain" description="Radical SAM core" evidence="3">
    <location>
        <begin position="62"/>
        <end position="311"/>
    </location>
</feature>
<feature type="binding site" evidence="2">
    <location>
        <position position="76"/>
    </location>
    <ligand>
        <name>[4Fe-4S] cluster</name>
        <dbReference type="ChEBI" id="CHEBI:49883"/>
        <label>1</label>
        <note>4Fe-4S-S-AdoMet</note>
    </ligand>
</feature>
<feature type="binding site" evidence="2">
    <location>
        <position position="80"/>
    </location>
    <ligand>
        <name>[4Fe-4S] cluster</name>
        <dbReference type="ChEBI" id="CHEBI:49883"/>
        <label>1</label>
        <note>4Fe-4S-S-AdoMet</note>
    </ligand>
</feature>
<feature type="binding site" evidence="2">
    <location>
        <position position="82"/>
    </location>
    <ligand>
        <name>S-adenosyl-L-methionine</name>
        <dbReference type="ChEBI" id="CHEBI:59789"/>
    </ligand>
</feature>
<feature type="binding site" evidence="2">
    <location>
        <position position="83"/>
    </location>
    <ligand>
        <name>[4Fe-4S] cluster</name>
        <dbReference type="ChEBI" id="CHEBI:49883"/>
        <label>1</label>
        <note>4Fe-4S-S-AdoMet</note>
    </ligand>
</feature>
<feature type="binding site" evidence="2">
    <location>
        <position position="130"/>
    </location>
    <ligand>
        <name>S-adenosyl-L-methionine</name>
        <dbReference type="ChEBI" id="CHEBI:59789"/>
    </ligand>
</feature>
<feature type="binding site" evidence="2">
    <location>
        <position position="182"/>
    </location>
    <ligand>
        <name>S-adenosyl-L-methionine</name>
        <dbReference type="ChEBI" id="CHEBI:59789"/>
    </ligand>
</feature>
<feature type="binding site" evidence="2">
    <location>
        <position position="234"/>
    </location>
    <ligand>
        <name>S-adenosyl-L-methionine</name>
        <dbReference type="ChEBI" id="CHEBI:59789"/>
    </ligand>
</feature>
<feature type="binding site" evidence="1">
    <location>
        <position position="307"/>
    </location>
    <ligand>
        <name>[4Fe-4S] cluster</name>
        <dbReference type="ChEBI" id="CHEBI:49883"/>
        <label>2</label>
    </ligand>
</feature>
<feature type="binding site" evidence="1">
    <location>
        <position position="310"/>
    </location>
    <ligand>
        <name>[4Fe-4S] cluster</name>
        <dbReference type="ChEBI" id="CHEBI:49883"/>
        <label>2</label>
    </ligand>
</feature>
<comment type="function">
    <text evidence="1">Involved in the biosynthesis of the iron-molybdenum cofactor (FeMo-co or M-cluster) found in the dinitrogenase enzyme of the nitrogenase complex in nitrogen-fixing microorganisms. NifB catalyzes the crucial step of radical SAM-dependent carbide insertion that occurs concomitant with the insertion of a 9th sulfur and the rearrangement/coupling of two [4Fe-4S] clusters into a [8Fe-9S-C] cluster, the precursor to the M-cluster.</text>
</comment>
<comment type="cofactor">
    <cofactor evidence="1">
        <name>[4Fe-4S] cluster</name>
        <dbReference type="ChEBI" id="CHEBI:49883"/>
    </cofactor>
    <text evidence="1">Binds 3 [4Fe-4S] clusters per monomer. One cluster is coordinated with 3 cysteines and an exchangeable S-adenosyl-L-methionine. The two others probably act as substrate.</text>
</comment>
<comment type="pathway">
    <text evidence="1">Cofactor biosynthesis; Fe-Mo cofactor biosynthesis.</text>
</comment>
<comment type="similarity">
    <text evidence="4">Belongs to the radical SAM superfamily. NifB family.</text>
</comment>
<gene>
    <name type="primary">nifB</name>
    <name type="ordered locus">NGR_a01270</name>
    <name type="ORF">y4uM</name>
</gene>
<sequence length="493" mass="53507">MSAPIISLESLTNTTSSGQLLTTAKSGGCASSSCGSSSRPTDMDSATWEKIKDHPCFSEEAHHYFARMHVAVAPACNIQCNYCNRKYDCANESRPGVVSEKLTPDQALRKVVAVANEVPQLSVLGIAGPGDACYDWNKTRATFERVASEIPDIKLCISTNGLALPEHVDKLAEMNVSHVTITINMVDPAVGEKIYPWIFYGHRRYTGVDAAKILHEQQMLGLEMLTARGILTKINSVMIPGVNDLHLIEVNKWVKERGAFLHNVMPLISDPAHGTSFGLTGQRGPNALELKALHDRLEGGAKLMRHCRQCRADAVGLLGTDRGQEFTLDHVPLEPHYDGAKRQAYREVVARIRDDHLEAKEKAIATVASANIRGSLQVAVATKGGGRINEHFGHAKEFQVYEASQTGIKFVGHRKVEPYCHGGWGEDAALAGIIAALDGIDIVLCARIGDCPKERLMEAGIRATDTYGYDYIEAAISALHATEFGTAPSQATA</sequence>
<proteinExistence type="inferred from homology"/>
<keyword id="KW-0004">4Fe-4S</keyword>
<keyword id="KW-0408">Iron</keyword>
<keyword id="KW-0411">Iron-sulfur</keyword>
<keyword id="KW-0456">Lyase</keyword>
<keyword id="KW-0479">Metal-binding</keyword>
<keyword id="KW-0535">Nitrogen fixation</keyword>
<keyword id="KW-0614">Plasmid</keyword>
<keyword id="KW-1185">Reference proteome</keyword>
<keyword id="KW-0949">S-adenosyl-L-methionine</keyword>
<dbReference type="EC" id="4.-.-.-"/>
<dbReference type="EMBL" id="Z68203">
    <property type="protein sequence ID" value="CAA92412.1"/>
    <property type="molecule type" value="Genomic_DNA"/>
</dbReference>
<dbReference type="EMBL" id="U00090">
    <property type="protein sequence ID" value="AAB91885.1"/>
    <property type="molecule type" value="Genomic_DNA"/>
</dbReference>
<dbReference type="RefSeq" id="NP_444098.1">
    <property type="nucleotide sequence ID" value="NC_000914.2"/>
</dbReference>
<dbReference type="SMR" id="Q53205"/>
<dbReference type="KEGG" id="rhi:NGR_a01270"/>
<dbReference type="PATRIC" id="fig|394.7.peg.111"/>
<dbReference type="eggNOG" id="COG0535">
    <property type="taxonomic scope" value="Bacteria"/>
</dbReference>
<dbReference type="HOGENOM" id="CLU_027639_0_0_5"/>
<dbReference type="OrthoDB" id="9785734at2"/>
<dbReference type="UniPathway" id="UPA00782"/>
<dbReference type="Proteomes" id="UP000001054">
    <property type="component" value="Plasmid pNGR234a"/>
</dbReference>
<dbReference type="GO" id="GO:0051539">
    <property type="term" value="F:4 iron, 4 sulfur cluster binding"/>
    <property type="evidence" value="ECO:0007669"/>
    <property type="project" value="UniProtKB-KW"/>
</dbReference>
<dbReference type="GO" id="GO:0016829">
    <property type="term" value="F:lyase activity"/>
    <property type="evidence" value="ECO:0007669"/>
    <property type="project" value="UniProtKB-KW"/>
</dbReference>
<dbReference type="GO" id="GO:0046872">
    <property type="term" value="F:metal ion binding"/>
    <property type="evidence" value="ECO:0007669"/>
    <property type="project" value="UniProtKB-KW"/>
</dbReference>
<dbReference type="GO" id="GO:0009399">
    <property type="term" value="P:nitrogen fixation"/>
    <property type="evidence" value="ECO:0007669"/>
    <property type="project" value="UniProtKB-KW"/>
</dbReference>
<dbReference type="CDD" id="cd00852">
    <property type="entry name" value="NifB"/>
    <property type="match status" value="1"/>
</dbReference>
<dbReference type="CDD" id="cd01335">
    <property type="entry name" value="Radical_SAM"/>
    <property type="match status" value="1"/>
</dbReference>
<dbReference type="Gene3D" id="3.20.20.70">
    <property type="entry name" value="Aldolase class I"/>
    <property type="match status" value="1"/>
</dbReference>
<dbReference type="Gene3D" id="3.30.420.130">
    <property type="entry name" value="Dinitrogenase iron-molybdenum cofactor biosynthesis domain"/>
    <property type="match status" value="1"/>
</dbReference>
<dbReference type="InterPro" id="IPR013785">
    <property type="entry name" value="Aldolase_TIM"/>
</dbReference>
<dbReference type="InterPro" id="IPR003731">
    <property type="entry name" value="Di-Nase_FeMo-co_biosynth"/>
</dbReference>
<dbReference type="InterPro" id="IPR036105">
    <property type="entry name" value="DiNase_FeMo-co_biosyn_sf"/>
</dbReference>
<dbReference type="InterPro" id="IPR000385">
    <property type="entry name" value="MoaA_NifB_PqqE_Fe-S-bd_CS"/>
</dbReference>
<dbReference type="InterPro" id="IPR005980">
    <property type="entry name" value="Nase_CF_NifB"/>
</dbReference>
<dbReference type="InterPro" id="IPR034165">
    <property type="entry name" value="NifB_C"/>
</dbReference>
<dbReference type="InterPro" id="IPR007197">
    <property type="entry name" value="rSAM"/>
</dbReference>
<dbReference type="NCBIfam" id="TIGR01290">
    <property type="entry name" value="nifB"/>
    <property type="match status" value="1"/>
</dbReference>
<dbReference type="PANTHER" id="PTHR43787:SF13">
    <property type="entry name" value="FEMO COFACTOR BIOSYNTHESIS PROTEIN NIFB"/>
    <property type="match status" value="1"/>
</dbReference>
<dbReference type="PANTHER" id="PTHR43787">
    <property type="entry name" value="FEMO COFACTOR BIOSYNTHESIS PROTEIN NIFB-RELATED"/>
    <property type="match status" value="1"/>
</dbReference>
<dbReference type="Pfam" id="PF02579">
    <property type="entry name" value="Nitro_FeMo-Co"/>
    <property type="match status" value="1"/>
</dbReference>
<dbReference type="Pfam" id="PF04055">
    <property type="entry name" value="Radical_SAM"/>
    <property type="match status" value="1"/>
</dbReference>
<dbReference type="SFLD" id="SFLDF00281">
    <property type="entry name" value="FeMo_cofactor_biosynthesis_pro"/>
    <property type="match status" value="1"/>
</dbReference>
<dbReference type="SFLD" id="SFLDG01068">
    <property type="entry name" value="FeMo_cofactor_biosynthesis_pro"/>
    <property type="match status" value="1"/>
</dbReference>
<dbReference type="SFLD" id="SFLDG01067">
    <property type="entry name" value="SPASM/twitch_domain_containing"/>
    <property type="match status" value="1"/>
</dbReference>
<dbReference type="SUPFAM" id="SSF53146">
    <property type="entry name" value="Nitrogenase accessory factor-like"/>
    <property type="match status" value="1"/>
</dbReference>
<dbReference type="SUPFAM" id="SSF102114">
    <property type="entry name" value="Radical SAM enzymes"/>
    <property type="match status" value="1"/>
</dbReference>
<dbReference type="PROSITE" id="PS01305">
    <property type="entry name" value="MOAA_NIFB_PQQE"/>
    <property type="match status" value="1"/>
</dbReference>
<dbReference type="PROSITE" id="PS51918">
    <property type="entry name" value="RADICAL_SAM"/>
    <property type="match status" value="1"/>
</dbReference>
<accession>Q53205</accession>
<protein>
    <recommendedName>
        <fullName>FeMo cofactor biosynthesis protein NifB</fullName>
        <ecNumber>4.-.-.-</ecNumber>
    </recommendedName>
    <alternativeName>
        <fullName>Nitrogenase cofactor maturase NifB</fullName>
    </alternativeName>
    <alternativeName>
        <fullName>Radical SAM assemblase NifB</fullName>
    </alternativeName>
</protein>